<gene>
    <name type="primary">CDC9</name>
    <name type="ordered locus">YDL164C</name>
</gene>
<feature type="transit peptide" description="Mitochondrion" evidence="2">
    <location>
        <begin position="1"/>
        <end position="44"/>
    </location>
</feature>
<feature type="chain" id="PRO_0000007274" description="DNA ligase 1">
    <location>
        <begin position="45"/>
        <end position="755"/>
    </location>
</feature>
<feature type="region of interest" description="Disordered" evidence="4">
    <location>
        <begin position="47"/>
        <end position="79"/>
    </location>
</feature>
<feature type="region of interest" description="Disordered" evidence="4">
    <location>
        <begin position="97"/>
        <end position="127"/>
    </location>
</feature>
<feature type="region of interest" description="Interaction with target DNA" evidence="1">
    <location>
        <begin position="309"/>
        <end position="318"/>
    </location>
</feature>
<feature type="region of interest" description="Interaction with target DNA" evidence="1">
    <location>
        <begin position="493"/>
        <end position="495"/>
    </location>
</feature>
<feature type="compositionally biased region" description="Polar residues" evidence="4">
    <location>
        <begin position="47"/>
        <end position="60"/>
    </location>
</feature>
<feature type="compositionally biased region" description="Low complexity" evidence="4">
    <location>
        <begin position="102"/>
        <end position="114"/>
    </location>
</feature>
<feature type="active site" description="N6-AMP-lysine intermediate" evidence="3">
    <location>
        <position position="419"/>
    </location>
</feature>
<feature type="binding site" evidence="1">
    <location>
        <position position="417"/>
    </location>
    <ligand>
        <name>ATP</name>
        <dbReference type="ChEBI" id="CHEBI:30616"/>
    </ligand>
</feature>
<feature type="binding site" evidence="1">
    <location>
        <position position="424"/>
    </location>
    <ligand>
        <name>ATP</name>
        <dbReference type="ChEBI" id="CHEBI:30616"/>
    </ligand>
</feature>
<feature type="binding site" evidence="1">
    <location>
        <position position="440"/>
    </location>
    <ligand>
        <name>ATP</name>
        <dbReference type="ChEBI" id="CHEBI:30616"/>
    </ligand>
</feature>
<feature type="binding site" evidence="1">
    <location>
        <position position="472"/>
    </location>
    <ligand>
        <name>Mg(2+)</name>
        <dbReference type="ChEBI" id="CHEBI:18420"/>
        <label>1</label>
    </ligand>
</feature>
<feature type="binding site" evidence="1">
    <location>
        <position position="571"/>
    </location>
    <ligand>
        <name>Mg(2+)</name>
        <dbReference type="ChEBI" id="CHEBI:18420"/>
        <label>2</label>
    </ligand>
</feature>
<feature type="binding site" evidence="1">
    <location>
        <position position="576"/>
    </location>
    <ligand>
        <name>ATP</name>
        <dbReference type="ChEBI" id="CHEBI:30616"/>
    </ligand>
</feature>
<feature type="binding site" evidence="1">
    <location>
        <position position="590"/>
    </location>
    <ligand>
        <name>ATP</name>
        <dbReference type="ChEBI" id="CHEBI:30616"/>
    </ligand>
</feature>
<feature type="binding site" evidence="1">
    <location>
        <position position="596"/>
    </location>
    <ligand>
        <name>ATP</name>
        <dbReference type="ChEBI" id="CHEBI:30616"/>
    </ligand>
</feature>
<feature type="site" description="Interaction with target DNA" evidence="1">
    <location>
        <position position="164"/>
    </location>
</feature>
<feature type="site" description="Interaction with target DNA" evidence="1">
    <location>
        <position position="441"/>
    </location>
</feature>
<feature type="site" description="Interaction with target DNA" evidence="1">
    <location>
        <position position="622"/>
    </location>
</feature>
<feature type="site" description="Interaction with target DNA" evidence="1">
    <location>
        <position position="647"/>
    </location>
</feature>
<feature type="modified residue" description="Phosphoserine" evidence="7 8">
    <location>
        <position position="58"/>
    </location>
</feature>
<feature type="modified residue" description="Phosphoserine" evidence="7 8 9">
    <location>
        <position position="75"/>
    </location>
</feature>
<feature type="modified residue" description="Phosphoserine" evidence="9">
    <location>
        <position position="119"/>
    </location>
</feature>
<feature type="modified residue" description="Phosphoserine" evidence="9">
    <location>
        <position position="123"/>
    </location>
</feature>
<feature type="splice variant" id="VSP_018719" description="In isoform Nuclear." evidence="6">
    <location>
        <begin position="1"/>
        <end position="23"/>
    </location>
</feature>
<feature type="sequence conflict" description="In Ref. 1; CAA27005." evidence="6" ref="1">
    <original>D</original>
    <variation>E</variation>
    <location>
        <position position="69"/>
    </location>
</feature>
<feature type="sequence conflict" description="In Ref. 1; CAA27005." evidence="6" ref="1">
    <original>L</original>
    <variation>V</variation>
    <location>
        <position position="186"/>
    </location>
</feature>
<feature type="sequence conflict" description="In Ref. 5; CAA48158." evidence="6" ref="5">
    <original>G</original>
    <variation>E</variation>
    <location>
        <position position="671"/>
    </location>
</feature>
<feature type="sequence conflict" description="In Ref. 5; CAA48158." evidence="6" ref="5">
    <original>R</original>
    <variation>I</variation>
    <location>
        <position position="724"/>
    </location>
</feature>
<feature type="helix" evidence="11">
    <location>
        <begin position="41"/>
        <end position="44"/>
    </location>
</feature>
<feature type="initiator methionine" description="Removed" evidence="10">
    <location sequence="P04819-2">
        <position position="1"/>
    </location>
</feature>
<feature type="modified residue" description="N-acetylserine" evidence="10">
    <location sequence="P04819-2">
        <position position="2"/>
    </location>
</feature>
<sequence>MRRLLTGCLLSSARPLKSRLPLLMSSSLPSSAGKKPKQATLARFFTSMKNKPTEGTPSPKKSSKHMLEDRMDNVSGEEEYATKKLKQTAVTHTVAAPSSMGSNFSSIPSSAPSSGVADSPQQSQRLVGEVEDALSSNNNDHYSSNIPYSEVCEVFNKIEAISSRLEIIRICSDFFIKIMKQSSKNLIPTTYLFINRLGPDYEAGLELGLGENLLMKTISETCGKSMSQIKLKYKDIGDLGEIAMGARNVQPTMFKPKPLTVGEVFKNLRAIAKTQGKDSQLKKMKLIKRMLTACKGIEAKFLIRSLESKLRIGLAEKTVLISLSKALLLHDENREDSPDKDVPMDVLESAQQKIRDAFCQVPNYEIVINSCLEHGIMNLDKYCTLRPGIPLKPMLAKPTKAINEVLDRFQGETFTSEYKYDGERAQVHLLNDGTMRIYSRNGENMTERYPEINITDFIQDLDTTKNLILDCEAVAWDKDQGKILPFQVLSTRKRKDVELNDVKVKVCLFAFDILCYNDERLINKSLKERREYLTKVTKVVPGEFQYATQITTNNLDELQKFLDESVNHSCEGLMVKMLEGPESHYEPSKRSRNWLKLKKDYLEGVGDSLDLCVLGAYYGRGKRTGTYGGFLLGCYNQDTGEFETCCKIGTGFSDEMLQLLHDRLTPTIIDGPKATFVFDSSAEPDVWFEPTTLFEVLTADLSLSPIYKAGSATFDKGVSLRFPRFLRIREDKGVEDATSSDQIVELYENQSHMQN</sequence>
<accession>P04819</accession>
<accession>D6VRI7</accession>
<accession>Q12736</accession>
<name>DNLI1_YEAST</name>
<organism>
    <name type="scientific">Saccharomyces cerevisiae (strain ATCC 204508 / S288c)</name>
    <name type="common">Baker's yeast</name>
    <dbReference type="NCBI Taxonomy" id="559292"/>
    <lineage>
        <taxon>Eukaryota</taxon>
        <taxon>Fungi</taxon>
        <taxon>Dikarya</taxon>
        <taxon>Ascomycota</taxon>
        <taxon>Saccharomycotina</taxon>
        <taxon>Saccharomycetes</taxon>
        <taxon>Saccharomycetales</taxon>
        <taxon>Saccharomycetaceae</taxon>
        <taxon>Saccharomyces</taxon>
    </lineage>
</organism>
<reference key="1">
    <citation type="journal article" date="1985" name="Nucleic Acids Res.">
        <title>The nucleotide sequence of the DNA ligase gene (CDC9) from Saccharomyces cerevisiae: a gene which is cell-cycle regulated and induced in response to DNA damage.</title>
        <authorList>
            <person name="Barker D.G."/>
            <person name="White J.H.M."/>
            <person name="Johnston L.H."/>
        </authorList>
    </citation>
    <scope>NUCLEOTIDE SEQUENCE [GENOMIC DNA]</scope>
</reference>
<reference key="2">
    <citation type="journal article" date="1997" name="Nature">
        <title>The nucleotide sequence of Saccharomyces cerevisiae chromosome IV.</title>
        <authorList>
            <person name="Jacq C."/>
            <person name="Alt-Moerbe J."/>
            <person name="Andre B."/>
            <person name="Arnold W."/>
            <person name="Bahr A."/>
            <person name="Ballesta J.P.G."/>
            <person name="Bargues M."/>
            <person name="Baron L."/>
            <person name="Becker A."/>
            <person name="Biteau N."/>
            <person name="Bloecker H."/>
            <person name="Blugeon C."/>
            <person name="Boskovic J."/>
            <person name="Brandt P."/>
            <person name="Brueckner M."/>
            <person name="Buitrago M.J."/>
            <person name="Coster F."/>
            <person name="Delaveau T."/>
            <person name="del Rey F."/>
            <person name="Dujon B."/>
            <person name="Eide L.G."/>
            <person name="Garcia-Cantalejo J.M."/>
            <person name="Goffeau A."/>
            <person name="Gomez-Peris A."/>
            <person name="Granotier C."/>
            <person name="Hanemann V."/>
            <person name="Hankeln T."/>
            <person name="Hoheisel J.D."/>
            <person name="Jaeger W."/>
            <person name="Jimenez A."/>
            <person name="Jonniaux J.-L."/>
            <person name="Kraemer C."/>
            <person name="Kuester H."/>
            <person name="Laamanen P."/>
            <person name="Legros Y."/>
            <person name="Louis E.J."/>
            <person name="Moeller-Rieker S."/>
            <person name="Monnet A."/>
            <person name="Moro M."/>
            <person name="Mueller-Auer S."/>
            <person name="Nussbaumer B."/>
            <person name="Paricio N."/>
            <person name="Paulin L."/>
            <person name="Perea J."/>
            <person name="Perez-Alonso M."/>
            <person name="Perez-Ortin J.E."/>
            <person name="Pohl T.M."/>
            <person name="Prydz H."/>
            <person name="Purnelle B."/>
            <person name="Rasmussen S.W."/>
            <person name="Remacha M.A."/>
            <person name="Revuelta J.L."/>
            <person name="Rieger M."/>
            <person name="Salom D."/>
            <person name="Saluz H.P."/>
            <person name="Saiz J.E."/>
            <person name="Saren A.-M."/>
            <person name="Schaefer M."/>
            <person name="Scharfe M."/>
            <person name="Schmidt E.R."/>
            <person name="Schneider C."/>
            <person name="Scholler P."/>
            <person name="Schwarz S."/>
            <person name="Soler-Mira A."/>
            <person name="Urrestarazu L.A."/>
            <person name="Verhasselt P."/>
            <person name="Vissers S."/>
            <person name="Voet M."/>
            <person name="Volckaert G."/>
            <person name="Wagner G."/>
            <person name="Wambutt R."/>
            <person name="Wedler E."/>
            <person name="Wedler H."/>
            <person name="Woelfl S."/>
            <person name="Harris D.E."/>
            <person name="Bowman S."/>
            <person name="Brown D."/>
            <person name="Churcher C.M."/>
            <person name="Connor R."/>
            <person name="Dedman K."/>
            <person name="Gentles S."/>
            <person name="Hamlin N."/>
            <person name="Hunt S."/>
            <person name="Jones L."/>
            <person name="McDonald S."/>
            <person name="Murphy L.D."/>
            <person name="Niblett D."/>
            <person name="Odell C."/>
            <person name="Oliver K."/>
            <person name="Rajandream M.A."/>
            <person name="Richards C."/>
            <person name="Shore L."/>
            <person name="Walsh S.V."/>
            <person name="Barrell B.G."/>
            <person name="Dietrich F.S."/>
            <person name="Mulligan J.T."/>
            <person name="Allen E."/>
            <person name="Araujo R."/>
            <person name="Aviles E."/>
            <person name="Berno A."/>
            <person name="Carpenter J."/>
            <person name="Chen E."/>
            <person name="Cherry J.M."/>
            <person name="Chung E."/>
            <person name="Duncan M."/>
            <person name="Hunicke-Smith S."/>
            <person name="Hyman R.W."/>
            <person name="Komp C."/>
            <person name="Lashkari D."/>
            <person name="Lew H."/>
            <person name="Lin D."/>
            <person name="Mosedale D."/>
            <person name="Nakahara K."/>
            <person name="Namath A."/>
            <person name="Oefner P."/>
            <person name="Oh C."/>
            <person name="Petel F.X."/>
            <person name="Roberts D."/>
            <person name="Schramm S."/>
            <person name="Schroeder M."/>
            <person name="Shogren T."/>
            <person name="Shroff N."/>
            <person name="Winant A."/>
            <person name="Yelton M.A."/>
            <person name="Botstein D."/>
            <person name="Davis R.W."/>
            <person name="Johnston M."/>
            <person name="Andrews S."/>
            <person name="Brinkman R."/>
            <person name="Cooper J."/>
            <person name="Ding H."/>
            <person name="Du Z."/>
            <person name="Favello A."/>
            <person name="Fulton L."/>
            <person name="Gattung S."/>
            <person name="Greco T."/>
            <person name="Hallsworth K."/>
            <person name="Hawkins J."/>
            <person name="Hillier L.W."/>
            <person name="Jier M."/>
            <person name="Johnson D."/>
            <person name="Johnston L."/>
            <person name="Kirsten J."/>
            <person name="Kucaba T."/>
            <person name="Langston Y."/>
            <person name="Latreille P."/>
            <person name="Le T."/>
            <person name="Mardis E."/>
            <person name="Menezes S."/>
            <person name="Miller N."/>
            <person name="Nhan M."/>
            <person name="Pauley A."/>
            <person name="Peluso D."/>
            <person name="Rifkin L."/>
            <person name="Riles L."/>
            <person name="Taich A."/>
            <person name="Trevaskis E."/>
            <person name="Vignati D."/>
            <person name="Wilcox L."/>
            <person name="Wohldman P."/>
            <person name="Vaudin M."/>
            <person name="Wilson R."/>
            <person name="Waterston R."/>
            <person name="Albermann K."/>
            <person name="Hani J."/>
            <person name="Heumann K."/>
            <person name="Kleine K."/>
            <person name="Mewes H.-W."/>
            <person name="Zollner A."/>
            <person name="Zaccaria P."/>
        </authorList>
    </citation>
    <scope>NUCLEOTIDE SEQUENCE [LARGE SCALE GENOMIC DNA]</scope>
    <source>
        <strain>ATCC 204508 / S288c</strain>
    </source>
</reference>
<reference key="3">
    <citation type="journal article" date="2014" name="G3 (Bethesda)">
        <title>The reference genome sequence of Saccharomyces cerevisiae: Then and now.</title>
        <authorList>
            <person name="Engel S.R."/>
            <person name="Dietrich F.S."/>
            <person name="Fisk D.G."/>
            <person name="Binkley G."/>
            <person name="Balakrishnan R."/>
            <person name="Costanzo M.C."/>
            <person name="Dwight S.S."/>
            <person name="Hitz B.C."/>
            <person name="Karra K."/>
            <person name="Nash R.S."/>
            <person name="Weng S."/>
            <person name="Wong E.D."/>
            <person name="Lloyd P."/>
            <person name="Skrzypek M.S."/>
            <person name="Miyasato S.R."/>
            <person name="Simison M."/>
            <person name="Cherry J.M."/>
        </authorList>
    </citation>
    <scope>GENOME REANNOTATION</scope>
    <source>
        <strain>ATCC 204508 / S288c</strain>
    </source>
</reference>
<reference key="4">
    <citation type="journal article" date="2007" name="Genome Res.">
        <title>Approaching a complete repository of sequence-verified protein-encoding clones for Saccharomyces cerevisiae.</title>
        <authorList>
            <person name="Hu Y."/>
            <person name="Rolfs A."/>
            <person name="Bhullar B."/>
            <person name="Murthy T.V.S."/>
            <person name="Zhu C."/>
            <person name="Berger M.F."/>
            <person name="Camargo A.A."/>
            <person name="Kelley F."/>
            <person name="McCarron S."/>
            <person name="Jepson D."/>
            <person name="Richardson A."/>
            <person name="Raphael J."/>
            <person name="Moreira D."/>
            <person name="Taycher E."/>
            <person name="Zuo D."/>
            <person name="Mohr S."/>
            <person name="Kane M.F."/>
            <person name="Williamson J."/>
            <person name="Simpson A.J.G."/>
            <person name="Bulyk M.L."/>
            <person name="Harlow E."/>
            <person name="Marsischky G."/>
            <person name="Kolodner R.D."/>
            <person name="LaBaer J."/>
        </authorList>
    </citation>
    <scope>NUCLEOTIDE SEQUENCE [GENOMIC DNA]</scope>
    <source>
        <strain>ATCC 204508 / S288c</strain>
    </source>
</reference>
<reference key="5">
    <citation type="journal article" date="1993" name="Mol. Gen. Genet.">
        <title>Molecular structure and genetic regulation of SFA, a gene responsible for resistance to formaldehyde in Saccharomyces cerevisiae, and characterization of its protein product.</title>
        <authorList>
            <person name="Wehner E.P."/>
            <person name="Rao E."/>
            <person name="Brendel M."/>
        </authorList>
    </citation>
    <scope>NUCLEOTIDE SEQUENCE [GENOMIC DNA] OF 610-755</scope>
    <source>
        <strain>ATCC 38626 / AH22 / NRRL Y-12843</strain>
    </source>
</reference>
<reference key="6">
    <citation type="journal article" date="1999" name="Curr. Biol.">
        <title>The yeast CDC9 gene encodes both a nuclear and a mitochondrial form of DNA ligase I.</title>
        <authorList>
            <person name="Willer M."/>
            <person name="Rainey M."/>
            <person name="Pullen T."/>
            <person name="Stirling C.J."/>
        </authorList>
    </citation>
    <scope>ALTERNATIVE INITIATION</scope>
</reference>
<reference key="7">
    <citation type="journal article" date="2003" name="Nature">
        <title>Global analysis of protein expression in yeast.</title>
        <authorList>
            <person name="Ghaemmaghami S."/>
            <person name="Huh W.-K."/>
            <person name="Bower K."/>
            <person name="Howson R.W."/>
            <person name="Belle A."/>
            <person name="Dephoure N."/>
            <person name="O'Shea E.K."/>
            <person name="Weissman J.S."/>
        </authorList>
    </citation>
    <scope>LEVEL OF PROTEIN EXPRESSION [LARGE SCALE ANALYSIS]</scope>
</reference>
<reference key="8">
    <citation type="journal article" date="2007" name="Proc. Natl. Acad. Sci. U.S.A.">
        <title>Analysis of phosphorylation sites on proteins from Saccharomyces cerevisiae by electron transfer dissociation (ETD) mass spectrometry.</title>
        <authorList>
            <person name="Chi A."/>
            <person name="Huttenhower C."/>
            <person name="Geer L.Y."/>
            <person name="Coon J.J."/>
            <person name="Syka J.E.P."/>
            <person name="Bai D.L."/>
            <person name="Shabanowitz J."/>
            <person name="Burke D.J."/>
            <person name="Troyanskaya O.G."/>
            <person name="Hunt D.F."/>
        </authorList>
    </citation>
    <scope>PHOSPHORYLATION [LARGE SCALE ANALYSIS] AT SER-58 AND SER-75</scope>
    <scope>IDENTIFICATION BY MASS SPECTROMETRY [LARGE SCALE ANALYSIS]</scope>
</reference>
<reference key="9">
    <citation type="journal article" date="2008" name="Mol. Cell. Proteomics">
        <title>A multidimensional chromatography technology for in-depth phosphoproteome analysis.</title>
        <authorList>
            <person name="Albuquerque C.P."/>
            <person name="Smolka M.B."/>
            <person name="Payne S.H."/>
            <person name="Bafna V."/>
            <person name="Eng J."/>
            <person name="Zhou H."/>
        </authorList>
    </citation>
    <scope>PHOSPHORYLATION [LARGE SCALE ANALYSIS] AT SER-58 AND SER-75</scope>
    <scope>IDENTIFICATION BY MASS SPECTROMETRY [LARGE SCALE ANALYSIS]</scope>
</reference>
<reference key="10">
    <citation type="journal article" date="2009" name="Science">
        <title>Global analysis of Cdk1 substrate phosphorylation sites provides insights into evolution.</title>
        <authorList>
            <person name="Holt L.J."/>
            <person name="Tuch B.B."/>
            <person name="Villen J."/>
            <person name="Johnson A.D."/>
            <person name="Gygi S.P."/>
            <person name="Morgan D.O."/>
        </authorList>
    </citation>
    <scope>PHOSPHORYLATION [LARGE SCALE ANALYSIS] AT SER-75; SER-119 AND SER-123</scope>
    <scope>IDENTIFICATION BY MASS SPECTROMETRY [LARGE SCALE ANALYSIS]</scope>
</reference>
<reference key="11">
    <citation type="journal article" date="2012" name="Proc. Natl. Acad. Sci. U.S.A.">
        <title>N-terminal acetylome analyses and functional insights of the N-terminal acetyltransferase NatB.</title>
        <authorList>
            <person name="Van Damme P."/>
            <person name="Lasa M."/>
            <person name="Polevoda B."/>
            <person name="Gazquez C."/>
            <person name="Elosegui-Artola A."/>
            <person name="Kim D.S."/>
            <person name="De Juan-Pardo E."/>
            <person name="Demeyer K."/>
            <person name="Hole K."/>
            <person name="Larrea E."/>
            <person name="Timmerman E."/>
            <person name="Prieto J."/>
            <person name="Arnesen T."/>
            <person name="Sherman F."/>
            <person name="Gevaert K."/>
            <person name="Aldabe R."/>
        </authorList>
    </citation>
    <scope>ACETYLATION [LARGE SCALE ANALYSIS] AT SER-2 (ISOFORM NUCLEAR)</scope>
    <scope>CLEAVAGE OF INITIATOR METHIONINE [LARGE SCALE ANALYSIS] (ISOFORM NUCLEAR)</scope>
    <scope>IDENTIFICATION BY MASS SPECTROMETRY [LARGE SCALE ANALYSIS]</scope>
</reference>
<comment type="function">
    <text>DNA ligase that seals nicks in double-stranded DNA during DNA replication, DNA recombination and DNA repair. The mitochondrial form is required for mitochondrial DNA maintenance but is non-essential while the nuclear form is essential for cell viability.</text>
</comment>
<comment type="catalytic activity">
    <reaction evidence="3">
        <text>ATP + (deoxyribonucleotide)n-3'-hydroxyl + 5'-phospho-(deoxyribonucleotide)m = (deoxyribonucleotide)n+m + AMP + diphosphate.</text>
        <dbReference type="EC" id="6.5.1.1"/>
    </reaction>
</comment>
<comment type="cofactor">
    <cofactor evidence="1">
        <name>Mg(2+)</name>
        <dbReference type="ChEBI" id="CHEBI:18420"/>
    </cofactor>
</comment>
<comment type="subcellular location">
    <molecule>Isoform Mitochondrial</molecule>
    <subcellularLocation>
        <location>Mitochondrion</location>
    </subcellularLocation>
</comment>
<comment type="subcellular location">
    <molecule>Isoform Nuclear</molecule>
    <subcellularLocation>
        <location>Nucleus</location>
    </subcellularLocation>
</comment>
<comment type="alternative products">
    <event type="alternative initiation"/>
    <isoform>
        <id>P04819-1</id>
        <name>Mitochondrial</name>
        <sequence type="displayed"/>
    </isoform>
    <isoform>
        <id>P04819-2</id>
        <name>Nuclear</name>
        <sequence type="described" ref="VSP_018719"/>
    </isoform>
</comment>
<comment type="miscellaneous">
    <text>Cdc9 is included within the category of so-called 'start genes', encoding proteins which are required in early G1, when the cell is faced with the option of initiating a further cell cycle.</text>
</comment>
<comment type="miscellaneous">
    <text evidence="5">Present with 149 molecules/cell in log phase SD medium.</text>
</comment>
<comment type="miscellaneous">
    <molecule>Isoform Nuclear</molecule>
    <text evidence="6">Produced by alternative initiation at Met-24 of isoform Mitochondrial.</text>
</comment>
<comment type="similarity">
    <text evidence="6">Belongs to the ATP-dependent DNA ligase family.</text>
</comment>
<evidence type="ECO:0000250" key="1"/>
<evidence type="ECO:0000255" key="2"/>
<evidence type="ECO:0000255" key="3">
    <source>
        <dbReference type="PROSITE-ProRule" id="PRU10135"/>
    </source>
</evidence>
<evidence type="ECO:0000256" key="4">
    <source>
        <dbReference type="SAM" id="MobiDB-lite"/>
    </source>
</evidence>
<evidence type="ECO:0000269" key="5">
    <source>
    </source>
</evidence>
<evidence type="ECO:0000305" key="6"/>
<evidence type="ECO:0007744" key="7">
    <source>
    </source>
</evidence>
<evidence type="ECO:0007744" key="8">
    <source>
    </source>
</evidence>
<evidence type="ECO:0007744" key="9">
    <source>
    </source>
</evidence>
<evidence type="ECO:0007744" key="10">
    <source>
    </source>
</evidence>
<evidence type="ECO:0007829" key="11">
    <source>
        <dbReference type="PDB" id="2OD8"/>
    </source>
</evidence>
<dbReference type="EC" id="6.5.1.1" evidence="3"/>
<dbReference type="EMBL" id="X03246">
    <property type="protein sequence ID" value="CAA27005.1"/>
    <property type="molecule type" value="Genomic_DNA"/>
</dbReference>
<dbReference type="EMBL" id="Z67750">
    <property type="protein sequence ID" value="CAA91582.1"/>
    <property type="molecule type" value="Genomic_DNA"/>
</dbReference>
<dbReference type="EMBL" id="Z74212">
    <property type="protein sequence ID" value="CAA98737.1"/>
    <property type="molecule type" value="Genomic_DNA"/>
</dbReference>
<dbReference type="EMBL" id="AY723764">
    <property type="protein sequence ID" value="AAU09681.1"/>
    <property type="molecule type" value="Genomic_DNA"/>
</dbReference>
<dbReference type="EMBL" id="X68020">
    <property type="protein sequence ID" value="CAA48158.1"/>
    <property type="molecule type" value="Genomic_DNA"/>
</dbReference>
<dbReference type="EMBL" id="BK006938">
    <property type="protein sequence ID" value="DAA11697.1"/>
    <property type="molecule type" value="Genomic_DNA"/>
</dbReference>
<dbReference type="PIR" id="S61049">
    <property type="entry name" value="LQBYPX"/>
</dbReference>
<dbReference type="RefSeq" id="NP_010117.1">
    <molecule id="P04819-1"/>
    <property type="nucleotide sequence ID" value="NM_001180224.1"/>
</dbReference>
<dbReference type="PDB" id="2OD8">
    <property type="method" value="X-ray"/>
    <property type="resolution" value="2.80 A"/>
    <property type="chains" value="B=32-53"/>
</dbReference>
<dbReference type="PDBsum" id="2OD8"/>
<dbReference type="SMR" id="P04819"/>
<dbReference type="BioGRID" id="31901">
    <property type="interactions" value="489"/>
</dbReference>
<dbReference type="DIP" id="DIP-5630N"/>
<dbReference type="ELM" id="P04819"/>
<dbReference type="FunCoup" id="P04819">
    <property type="interactions" value="803"/>
</dbReference>
<dbReference type="IntAct" id="P04819">
    <property type="interactions" value="39"/>
</dbReference>
<dbReference type="MINT" id="P04819"/>
<dbReference type="STRING" id="4932.YDL164C"/>
<dbReference type="GlyGen" id="P04819">
    <property type="glycosylation" value="1 site"/>
</dbReference>
<dbReference type="iPTMnet" id="P04819"/>
<dbReference type="PaxDb" id="4932-YDL164C"/>
<dbReference type="PeptideAtlas" id="P04819"/>
<dbReference type="EnsemblFungi" id="YDL164C_mRNA">
    <molecule id="P04819-1"/>
    <property type="protein sequence ID" value="YDL164C"/>
    <property type="gene ID" value="YDL164C"/>
</dbReference>
<dbReference type="GeneID" id="851391"/>
<dbReference type="KEGG" id="sce:YDL164C"/>
<dbReference type="AGR" id="SGD:S000002323"/>
<dbReference type="SGD" id="S000002323">
    <property type="gene designation" value="CDC9"/>
</dbReference>
<dbReference type="VEuPathDB" id="FungiDB:YDL164C"/>
<dbReference type="eggNOG" id="KOG0967">
    <property type="taxonomic scope" value="Eukaryota"/>
</dbReference>
<dbReference type="GeneTree" id="ENSGT00940000157783"/>
<dbReference type="HOGENOM" id="CLU_005138_4_1_1"/>
<dbReference type="InParanoid" id="P04819"/>
<dbReference type="OMA" id="WIKYKRD"/>
<dbReference type="OrthoDB" id="206088at2759"/>
<dbReference type="BioCyc" id="YEAST:G3O-29556-MONOMER"/>
<dbReference type="Reactome" id="R-SCE-5358565">
    <property type="pathway name" value="Mismatch repair (MMR) directed by MSH2:MSH6 (MutSalpha)"/>
</dbReference>
<dbReference type="Reactome" id="R-SCE-5358606">
    <property type="pathway name" value="Mismatch repair (MMR) directed by MSH2:MSH3 (MutSbeta)"/>
</dbReference>
<dbReference type="Reactome" id="R-SCE-6782210">
    <property type="pathway name" value="Gap-filling DNA repair synthesis and ligation in TC-NER"/>
</dbReference>
<dbReference type="Reactome" id="R-SCE-69183">
    <property type="pathway name" value="Processive synthesis on the lagging strand"/>
</dbReference>
<dbReference type="BioGRID-ORCS" id="851391">
    <property type="hits" value="6 hits in 10 CRISPR screens"/>
</dbReference>
<dbReference type="EvolutionaryTrace" id="P04819"/>
<dbReference type="PRO" id="PR:P04819"/>
<dbReference type="Proteomes" id="UP000002311">
    <property type="component" value="Chromosome IV"/>
</dbReference>
<dbReference type="RNAct" id="P04819">
    <property type="molecule type" value="protein"/>
</dbReference>
<dbReference type="GO" id="GO:0005739">
    <property type="term" value="C:mitochondrion"/>
    <property type="evidence" value="ECO:0000314"/>
    <property type="project" value="SGD"/>
</dbReference>
<dbReference type="GO" id="GO:0005634">
    <property type="term" value="C:nucleus"/>
    <property type="evidence" value="ECO:0000314"/>
    <property type="project" value="SGD"/>
</dbReference>
<dbReference type="GO" id="GO:0005524">
    <property type="term" value="F:ATP binding"/>
    <property type="evidence" value="ECO:0007669"/>
    <property type="project" value="UniProtKB-KW"/>
</dbReference>
<dbReference type="GO" id="GO:0003677">
    <property type="term" value="F:DNA binding"/>
    <property type="evidence" value="ECO:0007669"/>
    <property type="project" value="InterPro"/>
</dbReference>
<dbReference type="GO" id="GO:0003910">
    <property type="term" value="F:DNA ligase (ATP) activity"/>
    <property type="evidence" value="ECO:0000314"/>
    <property type="project" value="SGD"/>
</dbReference>
<dbReference type="GO" id="GO:0046872">
    <property type="term" value="F:metal ion binding"/>
    <property type="evidence" value="ECO:0007669"/>
    <property type="project" value="UniProtKB-KW"/>
</dbReference>
<dbReference type="GO" id="GO:0006284">
    <property type="term" value="P:base-excision repair"/>
    <property type="evidence" value="ECO:0000315"/>
    <property type="project" value="SGD"/>
</dbReference>
<dbReference type="GO" id="GO:0051301">
    <property type="term" value="P:cell division"/>
    <property type="evidence" value="ECO:0007669"/>
    <property type="project" value="UniProtKB-KW"/>
</dbReference>
<dbReference type="GO" id="GO:0071897">
    <property type="term" value="P:DNA biosynthetic process"/>
    <property type="evidence" value="ECO:0007669"/>
    <property type="project" value="InterPro"/>
</dbReference>
<dbReference type="GO" id="GO:0006310">
    <property type="term" value="P:DNA recombination"/>
    <property type="evidence" value="ECO:0000315"/>
    <property type="project" value="SGD"/>
</dbReference>
<dbReference type="GO" id="GO:0006273">
    <property type="term" value="P:lagging strand elongation"/>
    <property type="evidence" value="ECO:0000314"/>
    <property type="project" value="SGD"/>
</dbReference>
<dbReference type="GO" id="GO:0035753">
    <property type="term" value="P:maintenance of DNA trinucleotide repeats"/>
    <property type="evidence" value="ECO:0000315"/>
    <property type="project" value="SGD"/>
</dbReference>
<dbReference type="GO" id="GO:0000278">
    <property type="term" value="P:mitotic cell cycle"/>
    <property type="evidence" value="ECO:0000315"/>
    <property type="project" value="SGD"/>
</dbReference>
<dbReference type="GO" id="GO:0006289">
    <property type="term" value="P:nucleotide-excision repair"/>
    <property type="evidence" value="ECO:0000315"/>
    <property type="project" value="SGD"/>
</dbReference>
<dbReference type="GO" id="GO:1903461">
    <property type="term" value="P:Okazaki fragment processing involved in mitotic DNA replication"/>
    <property type="evidence" value="ECO:0000318"/>
    <property type="project" value="GO_Central"/>
</dbReference>
<dbReference type="CDD" id="cd07900">
    <property type="entry name" value="Adenylation_DNA_ligase_I_Euk"/>
    <property type="match status" value="1"/>
</dbReference>
<dbReference type="CDD" id="cd07969">
    <property type="entry name" value="OBF_DNA_ligase_I"/>
    <property type="match status" value="1"/>
</dbReference>
<dbReference type="FunFam" id="1.10.3260.10:FF:000001">
    <property type="entry name" value="DNA ligase"/>
    <property type="match status" value="1"/>
</dbReference>
<dbReference type="FunFam" id="2.40.50.140:FF:000062">
    <property type="entry name" value="DNA ligase"/>
    <property type="match status" value="1"/>
</dbReference>
<dbReference type="FunFam" id="3.30.470.30:FF:000002">
    <property type="entry name" value="DNA ligase"/>
    <property type="match status" value="1"/>
</dbReference>
<dbReference type="Gene3D" id="3.30.1490.70">
    <property type="match status" value="1"/>
</dbReference>
<dbReference type="Gene3D" id="1.10.3260.10">
    <property type="entry name" value="DNA ligase, ATP-dependent, N-terminal domain"/>
    <property type="match status" value="1"/>
</dbReference>
<dbReference type="Gene3D" id="3.30.470.30">
    <property type="entry name" value="DNA ligase/mRNA capping enzyme"/>
    <property type="match status" value="1"/>
</dbReference>
<dbReference type="Gene3D" id="2.40.50.140">
    <property type="entry name" value="Nucleic acid-binding proteins"/>
    <property type="match status" value="1"/>
</dbReference>
<dbReference type="IDEAL" id="IID50307"/>
<dbReference type="InterPro" id="IPR050191">
    <property type="entry name" value="ATP-dep_DNA_ligase"/>
</dbReference>
<dbReference type="InterPro" id="IPR000977">
    <property type="entry name" value="DNA_ligase_ATP-dep"/>
</dbReference>
<dbReference type="InterPro" id="IPR012309">
    <property type="entry name" value="DNA_ligase_ATP-dep_C"/>
</dbReference>
<dbReference type="InterPro" id="IPR012310">
    <property type="entry name" value="DNA_ligase_ATP-dep_cent"/>
</dbReference>
<dbReference type="InterPro" id="IPR016059">
    <property type="entry name" value="DNA_ligase_ATP-dep_CS"/>
</dbReference>
<dbReference type="InterPro" id="IPR012308">
    <property type="entry name" value="DNA_ligase_ATP-dep_N"/>
</dbReference>
<dbReference type="InterPro" id="IPR036599">
    <property type="entry name" value="DNA_ligase_N_sf"/>
</dbReference>
<dbReference type="InterPro" id="IPR012340">
    <property type="entry name" value="NA-bd_OB-fold"/>
</dbReference>
<dbReference type="NCBIfam" id="TIGR00574">
    <property type="entry name" value="dnl1"/>
    <property type="match status" value="1"/>
</dbReference>
<dbReference type="PANTHER" id="PTHR45674:SF4">
    <property type="entry name" value="DNA LIGASE 1"/>
    <property type="match status" value="1"/>
</dbReference>
<dbReference type="PANTHER" id="PTHR45674">
    <property type="entry name" value="DNA LIGASE 1/3 FAMILY MEMBER"/>
    <property type="match status" value="1"/>
</dbReference>
<dbReference type="Pfam" id="PF04679">
    <property type="entry name" value="DNA_ligase_A_C"/>
    <property type="match status" value="1"/>
</dbReference>
<dbReference type="Pfam" id="PF01068">
    <property type="entry name" value="DNA_ligase_A_M"/>
    <property type="match status" value="1"/>
</dbReference>
<dbReference type="Pfam" id="PF04675">
    <property type="entry name" value="DNA_ligase_A_N"/>
    <property type="match status" value="1"/>
</dbReference>
<dbReference type="SUPFAM" id="SSF117018">
    <property type="entry name" value="ATP-dependent DNA ligase DNA-binding domain"/>
    <property type="match status" value="1"/>
</dbReference>
<dbReference type="SUPFAM" id="SSF56091">
    <property type="entry name" value="DNA ligase/mRNA capping enzyme, catalytic domain"/>
    <property type="match status" value="1"/>
</dbReference>
<dbReference type="SUPFAM" id="SSF50249">
    <property type="entry name" value="Nucleic acid-binding proteins"/>
    <property type="match status" value="1"/>
</dbReference>
<dbReference type="PROSITE" id="PS00697">
    <property type="entry name" value="DNA_LIGASE_A1"/>
    <property type="match status" value="1"/>
</dbReference>
<dbReference type="PROSITE" id="PS00333">
    <property type="entry name" value="DNA_LIGASE_A2"/>
    <property type="match status" value="1"/>
</dbReference>
<dbReference type="PROSITE" id="PS50160">
    <property type="entry name" value="DNA_LIGASE_A3"/>
    <property type="match status" value="1"/>
</dbReference>
<proteinExistence type="evidence at protein level"/>
<protein>
    <recommendedName>
        <fullName>DNA ligase 1</fullName>
        <ecNumber evidence="3">6.5.1.1</ecNumber>
    </recommendedName>
    <alternativeName>
        <fullName>DNA ligase I</fullName>
    </alternativeName>
    <alternativeName>
        <fullName>Polydeoxyribonucleotide synthase [ATP] 1</fullName>
    </alternativeName>
</protein>
<keyword id="KW-0002">3D-structure</keyword>
<keyword id="KW-0007">Acetylation</keyword>
<keyword id="KW-0024">Alternative initiation</keyword>
<keyword id="KW-0067">ATP-binding</keyword>
<keyword id="KW-0131">Cell cycle</keyword>
<keyword id="KW-0132">Cell division</keyword>
<keyword id="KW-0227">DNA damage</keyword>
<keyword id="KW-0233">DNA recombination</keyword>
<keyword id="KW-0234">DNA repair</keyword>
<keyword id="KW-0235">DNA replication</keyword>
<keyword id="KW-0436">Ligase</keyword>
<keyword id="KW-0460">Magnesium</keyword>
<keyword id="KW-0479">Metal-binding</keyword>
<keyword id="KW-0496">Mitochondrion</keyword>
<keyword id="KW-0547">Nucleotide-binding</keyword>
<keyword id="KW-0539">Nucleus</keyword>
<keyword id="KW-0597">Phosphoprotein</keyword>
<keyword id="KW-1185">Reference proteome</keyword>
<keyword id="KW-0809">Transit peptide</keyword>